<protein>
    <recommendedName>
        <fullName evidence="1">3-isopropylmalate dehydratase large subunit</fullName>
        <ecNumber evidence="1">4.2.1.33</ecNumber>
    </recommendedName>
    <alternativeName>
        <fullName evidence="1">Alpha-IPM isomerase</fullName>
        <shortName evidence="1">IPMI</shortName>
    </alternativeName>
    <alternativeName>
        <fullName evidence="1">Isopropylmalate isomerase</fullName>
    </alternativeName>
</protein>
<feature type="chain" id="PRO_1000063528" description="3-isopropylmalate dehydratase large subunit">
    <location>
        <begin position="1"/>
        <end position="464"/>
    </location>
</feature>
<feature type="binding site" evidence="1">
    <location>
        <position position="337"/>
    </location>
    <ligand>
        <name>[4Fe-4S] cluster</name>
        <dbReference type="ChEBI" id="CHEBI:49883"/>
    </ligand>
</feature>
<feature type="binding site" evidence="1">
    <location>
        <position position="397"/>
    </location>
    <ligand>
        <name>[4Fe-4S] cluster</name>
        <dbReference type="ChEBI" id="CHEBI:49883"/>
    </ligand>
</feature>
<feature type="binding site" evidence="1">
    <location>
        <position position="400"/>
    </location>
    <ligand>
        <name>[4Fe-4S] cluster</name>
        <dbReference type="ChEBI" id="CHEBI:49883"/>
    </ligand>
</feature>
<keyword id="KW-0004">4Fe-4S</keyword>
<keyword id="KW-0028">Amino-acid biosynthesis</keyword>
<keyword id="KW-0100">Branched-chain amino acid biosynthesis</keyword>
<keyword id="KW-0408">Iron</keyword>
<keyword id="KW-0411">Iron-sulfur</keyword>
<keyword id="KW-0432">Leucine biosynthesis</keyword>
<keyword id="KW-0456">Lyase</keyword>
<keyword id="KW-0479">Metal-binding</keyword>
<evidence type="ECO:0000255" key="1">
    <source>
        <dbReference type="HAMAP-Rule" id="MF_01026"/>
    </source>
</evidence>
<gene>
    <name evidence="1" type="primary">leuC</name>
    <name type="ordered locus">BALH_1257</name>
</gene>
<dbReference type="EC" id="4.2.1.33" evidence="1"/>
<dbReference type="EMBL" id="CP000485">
    <property type="protein sequence ID" value="ABK84607.1"/>
    <property type="molecule type" value="Genomic_DNA"/>
</dbReference>
<dbReference type="RefSeq" id="WP_000520130.1">
    <property type="nucleotide sequence ID" value="NC_008600.1"/>
</dbReference>
<dbReference type="SMR" id="A0RBL4"/>
<dbReference type="KEGG" id="btl:BALH_1257"/>
<dbReference type="HOGENOM" id="CLU_006714_3_4_9"/>
<dbReference type="UniPathway" id="UPA00048">
    <property type="reaction ID" value="UER00071"/>
</dbReference>
<dbReference type="GO" id="GO:0003861">
    <property type="term" value="F:3-isopropylmalate dehydratase activity"/>
    <property type="evidence" value="ECO:0007669"/>
    <property type="project" value="UniProtKB-UniRule"/>
</dbReference>
<dbReference type="GO" id="GO:0051539">
    <property type="term" value="F:4 iron, 4 sulfur cluster binding"/>
    <property type="evidence" value="ECO:0007669"/>
    <property type="project" value="UniProtKB-KW"/>
</dbReference>
<dbReference type="GO" id="GO:0046872">
    <property type="term" value="F:metal ion binding"/>
    <property type="evidence" value="ECO:0007669"/>
    <property type="project" value="UniProtKB-KW"/>
</dbReference>
<dbReference type="GO" id="GO:0009098">
    <property type="term" value="P:L-leucine biosynthetic process"/>
    <property type="evidence" value="ECO:0007669"/>
    <property type="project" value="UniProtKB-UniRule"/>
</dbReference>
<dbReference type="CDD" id="cd01583">
    <property type="entry name" value="IPMI"/>
    <property type="match status" value="1"/>
</dbReference>
<dbReference type="FunFam" id="3.30.499.10:FF:000007">
    <property type="entry name" value="3-isopropylmalate dehydratase large subunit"/>
    <property type="match status" value="1"/>
</dbReference>
<dbReference type="Gene3D" id="3.30.499.10">
    <property type="entry name" value="Aconitase, domain 3"/>
    <property type="match status" value="2"/>
</dbReference>
<dbReference type="HAMAP" id="MF_01026">
    <property type="entry name" value="LeuC_type1"/>
    <property type="match status" value="1"/>
</dbReference>
<dbReference type="InterPro" id="IPR004430">
    <property type="entry name" value="3-IsopropMal_deHydase_lsu"/>
</dbReference>
<dbReference type="InterPro" id="IPR015931">
    <property type="entry name" value="Acnase/IPM_dHydase_lsu_aba_1/3"/>
</dbReference>
<dbReference type="InterPro" id="IPR001030">
    <property type="entry name" value="Acoase/IPM_deHydtase_lsu_aba"/>
</dbReference>
<dbReference type="InterPro" id="IPR018136">
    <property type="entry name" value="Aconitase_4Fe-4S_BS"/>
</dbReference>
<dbReference type="InterPro" id="IPR036008">
    <property type="entry name" value="Aconitase_4Fe-4S_dom"/>
</dbReference>
<dbReference type="InterPro" id="IPR050067">
    <property type="entry name" value="IPM_dehydratase_rel_enz"/>
</dbReference>
<dbReference type="InterPro" id="IPR033941">
    <property type="entry name" value="IPMI_cat"/>
</dbReference>
<dbReference type="NCBIfam" id="TIGR00170">
    <property type="entry name" value="leuC"/>
    <property type="match status" value="1"/>
</dbReference>
<dbReference type="NCBIfam" id="NF004016">
    <property type="entry name" value="PRK05478.1"/>
    <property type="match status" value="1"/>
</dbReference>
<dbReference type="NCBIfam" id="NF009116">
    <property type="entry name" value="PRK12466.1"/>
    <property type="match status" value="1"/>
</dbReference>
<dbReference type="PANTHER" id="PTHR43822:SF9">
    <property type="entry name" value="3-ISOPROPYLMALATE DEHYDRATASE"/>
    <property type="match status" value="1"/>
</dbReference>
<dbReference type="PANTHER" id="PTHR43822">
    <property type="entry name" value="HOMOACONITASE, MITOCHONDRIAL-RELATED"/>
    <property type="match status" value="1"/>
</dbReference>
<dbReference type="Pfam" id="PF00330">
    <property type="entry name" value="Aconitase"/>
    <property type="match status" value="1"/>
</dbReference>
<dbReference type="PRINTS" id="PR00415">
    <property type="entry name" value="ACONITASE"/>
</dbReference>
<dbReference type="SUPFAM" id="SSF53732">
    <property type="entry name" value="Aconitase iron-sulfur domain"/>
    <property type="match status" value="1"/>
</dbReference>
<dbReference type="PROSITE" id="PS00450">
    <property type="entry name" value="ACONITASE_1"/>
    <property type="match status" value="1"/>
</dbReference>
<dbReference type="PROSITE" id="PS01244">
    <property type="entry name" value="ACONITASE_2"/>
    <property type="match status" value="1"/>
</dbReference>
<proteinExistence type="inferred from homology"/>
<sequence length="464" mass="51565">MGKRLLDKLWERHVVTTNENGLDLLYIDLHLVHEVTSPQAFEGLRLTNRTVRRPDLTFATMDHNIPTKDVWNITDRIAKQQLDTLRENCKQFQVPLADIGDEEQGIVHVIGPELGLTQPGKTIVCGDSHTATHGAFGALAFGIGTSEVEHVLATQTLWQRKPKAMGIELKGKLQKGVYAKDIILHLLSKYGVAVGTGYVMEFYGETIESMEMEERMTLCNMAIEGGAKAGIIAPDEKTFAYVKGRKYAPKDYETFEKKWSEFYTDVDAMYDLHILIDVTDLAPYVTWGTNPSMGVRIDERLPEKNDVNDERAFSYMGLSPGQSTYDIPVQHVFIGSCTNSRLSDLEIAASVVKGKKVKEGVRALVVPGSKRVREAAMQKGLHRIFEEAGFEWREPGCSMCLGMNPDQVPEGEHCASTSNRNFEGRQGKGARTHLVSPAMAAAAALYGHFVDTRKESYDGAISYS</sequence>
<accession>A0RBL4</accession>
<organism>
    <name type="scientific">Bacillus thuringiensis (strain Al Hakam)</name>
    <dbReference type="NCBI Taxonomy" id="412694"/>
    <lineage>
        <taxon>Bacteria</taxon>
        <taxon>Bacillati</taxon>
        <taxon>Bacillota</taxon>
        <taxon>Bacilli</taxon>
        <taxon>Bacillales</taxon>
        <taxon>Bacillaceae</taxon>
        <taxon>Bacillus</taxon>
        <taxon>Bacillus cereus group</taxon>
    </lineage>
</organism>
<comment type="function">
    <text evidence="1">Catalyzes the isomerization between 2-isopropylmalate and 3-isopropylmalate, via the formation of 2-isopropylmaleate.</text>
</comment>
<comment type="catalytic activity">
    <reaction evidence="1">
        <text>(2R,3S)-3-isopropylmalate = (2S)-2-isopropylmalate</text>
        <dbReference type="Rhea" id="RHEA:32287"/>
        <dbReference type="ChEBI" id="CHEBI:1178"/>
        <dbReference type="ChEBI" id="CHEBI:35121"/>
        <dbReference type="EC" id="4.2.1.33"/>
    </reaction>
</comment>
<comment type="cofactor">
    <cofactor evidence="1">
        <name>[4Fe-4S] cluster</name>
        <dbReference type="ChEBI" id="CHEBI:49883"/>
    </cofactor>
    <text evidence="1">Binds 1 [4Fe-4S] cluster per subunit.</text>
</comment>
<comment type="pathway">
    <text evidence="1">Amino-acid biosynthesis; L-leucine biosynthesis; L-leucine from 3-methyl-2-oxobutanoate: step 2/4.</text>
</comment>
<comment type="subunit">
    <text evidence="1">Heterodimer of LeuC and LeuD.</text>
</comment>
<comment type="similarity">
    <text evidence="1">Belongs to the aconitase/IPM isomerase family. LeuC type 1 subfamily.</text>
</comment>
<name>LEUC_BACAH</name>
<reference key="1">
    <citation type="journal article" date="2007" name="J. Bacteriol.">
        <title>The complete genome sequence of Bacillus thuringiensis Al Hakam.</title>
        <authorList>
            <person name="Challacombe J.F."/>
            <person name="Altherr M.R."/>
            <person name="Xie G."/>
            <person name="Bhotika S.S."/>
            <person name="Brown N."/>
            <person name="Bruce D."/>
            <person name="Campbell C.S."/>
            <person name="Campbell M.L."/>
            <person name="Chen J."/>
            <person name="Chertkov O."/>
            <person name="Cleland C."/>
            <person name="Dimitrijevic M."/>
            <person name="Doggett N.A."/>
            <person name="Fawcett J.J."/>
            <person name="Glavina T."/>
            <person name="Goodwin L.A."/>
            <person name="Green L.D."/>
            <person name="Han C.S."/>
            <person name="Hill K.K."/>
            <person name="Hitchcock P."/>
            <person name="Jackson P.J."/>
            <person name="Keim P."/>
            <person name="Kewalramani A.R."/>
            <person name="Longmire J."/>
            <person name="Lucas S."/>
            <person name="Malfatti S."/>
            <person name="Martinez D."/>
            <person name="McMurry K."/>
            <person name="Meincke L.J."/>
            <person name="Misra M."/>
            <person name="Moseman B.L."/>
            <person name="Mundt M."/>
            <person name="Munk A.C."/>
            <person name="Okinaka R.T."/>
            <person name="Parson-Quintana B."/>
            <person name="Reilly L.P."/>
            <person name="Richardson P."/>
            <person name="Robinson D.L."/>
            <person name="Saunders E."/>
            <person name="Tapia R."/>
            <person name="Tesmer J.G."/>
            <person name="Thayer N."/>
            <person name="Thompson L.S."/>
            <person name="Tice H."/>
            <person name="Ticknor L.O."/>
            <person name="Wills P.L."/>
            <person name="Gilna P."/>
            <person name="Brettin T.S."/>
        </authorList>
    </citation>
    <scope>NUCLEOTIDE SEQUENCE [LARGE SCALE GENOMIC DNA]</scope>
    <source>
        <strain>Al Hakam</strain>
    </source>
</reference>